<proteinExistence type="inferred from homology"/>
<evidence type="ECO:0000255" key="1">
    <source>
        <dbReference type="HAMAP-Rule" id="MF_00454"/>
    </source>
</evidence>
<protein>
    <recommendedName>
        <fullName evidence="1">Fluoride-specific ion channel FluC</fullName>
    </recommendedName>
</protein>
<gene>
    <name evidence="1" type="primary">fluC</name>
    <name evidence="1" type="synonym">crcB</name>
    <name type="ordered locus">ABAYE3387</name>
</gene>
<feature type="chain" id="PRO_1000189704" description="Fluoride-specific ion channel FluC">
    <location>
        <begin position="1"/>
        <end position="126"/>
    </location>
</feature>
<feature type="transmembrane region" description="Helical" evidence="1">
    <location>
        <begin position="4"/>
        <end position="24"/>
    </location>
</feature>
<feature type="transmembrane region" description="Helical" evidence="1">
    <location>
        <begin position="33"/>
        <end position="53"/>
    </location>
</feature>
<feature type="transmembrane region" description="Helical" evidence="1">
    <location>
        <begin position="67"/>
        <end position="87"/>
    </location>
</feature>
<feature type="transmembrane region" description="Helical" evidence="1">
    <location>
        <begin position="97"/>
        <end position="117"/>
    </location>
</feature>
<feature type="binding site" evidence="1">
    <location>
        <position position="74"/>
    </location>
    <ligand>
        <name>Na(+)</name>
        <dbReference type="ChEBI" id="CHEBI:29101"/>
        <note>structural</note>
    </ligand>
</feature>
<feature type="binding site" evidence="1">
    <location>
        <position position="77"/>
    </location>
    <ligand>
        <name>Na(+)</name>
        <dbReference type="ChEBI" id="CHEBI:29101"/>
        <note>structural</note>
    </ligand>
</feature>
<accession>B0VEC3</accession>
<name>FLUC_ACIBY</name>
<reference key="1">
    <citation type="journal article" date="2008" name="PLoS ONE">
        <title>Comparative analysis of Acinetobacters: three genomes for three lifestyles.</title>
        <authorList>
            <person name="Vallenet D."/>
            <person name="Nordmann P."/>
            <person name="Barbe V."/>
            <person name="Poirel L."/>
            <person name="Mangenot S."/>
            <person name="Bataille E."/>
            <person name="Dossat C."/>
            <person name="Gas S."/>
            <person name="Kreimeyer A."/>
            <person name="Lenoble P."/>
            <person name="Oztas S."/>
            <person name="Poulain J."/>
            <person name="Segurens B."/>
            <person name="Robert C."/>
            <person name="Abergel C."/>
            <person name="Claverie J.-M."/>
            <person name="Raoult D."/>
            <person name="Medigue C."/>
            <person name="Weissenbach J."/>
            <person name="Cruveiller S."/>
        </authorList>
    </citation>
    <scope>NUCLEOTIDE SEQUENCE [LARGE SCALE GENOMIC DNA]</scope>
    <source>
        <strain>AYE</strain>
    </source>
</reference>
<comment type="function">
    <text evidence="1">Fluoride-specific ion channel. Important for reducing fluoride concentration in the cell, thus reducing its toxicity.</text>
</comment>
<comment type="catalytic activity">
    <reaction evidence="1">
        <text>fluoride(in) = fluoride(out)</text>
        <dbReference type="Rhea" id="RHEA:76159"/>
        <dbReference type="ChEBI" id="CHEBI:17051"/>
    </reaction>
    <physiologicalReaction direction="left-to-right" evidence="1">
        <dbReference type="Rhea" id="RHEA:76160"/>
    </physiologicalReaction>
</comment>
<comment type="activity regulation">
    <text evidence="1">Na(+) is not transported, but it plays an essential structural role and its presence is essential for fluoride channel function.</text>
</comment>
<comment type="subcellular location">
    <subcellularLocation>
        <location evidence="1">Cell inner membrane</location>
        <topology evidence="1">Multi-pass membrane protein</topology>
    </subcellularLocation>
</comment>
<comment type="similarity">
    <text evidence="1">Belongs to the fluoride channel Fluc/FEX (TC 1.A.43) family.</text>
</comment>
<sequence>MYYPLLSIALGSVLGAWLRWFLGLKLNPIYPQIPLGTVTVNLVGGFIIGFAMAYFAHSDLNPNYKLFVITGFCGALTTFSTFSIEIVTLLQSGKWGMAMLAISIHLIGSLIFTCLGLATYYWVAGH</sequence>
<dbReference type="EMBL" id="CU459141">
    <property type="protein sequence ID" value="CAM88182.1"/>
    <property type="molecule type" value="Genomic_DNA"/>
</dbReference>
<dbReference type="RefSeq" id="WP_000291731.1">
    <property type="nucleotide sequence ID" value="NZ_JBDGFB010000003.1"/>
</dbReference>
<dbReference type="SMR" id="B0VEC3"/>
<dbReference type="EnsemblBacteria" id="CAM88182">
    <property type="protein sequence ID" value="CAM88182"/>
    <property type="gene ID" value="ABAYE3387"/>
</dbReference>
<dbReference type="KEGG" id="aby:ABAYE3387"/>
<dbReference type="HOGENOM" id="CLU_114342_3_3_6"/>
<dbReference type="GO" id="GO:0005886">
    <property type="term" value="C:plasma membrane"/>
    <property type="evidence" value="ECO:0007669"/>
    <property type="project" value="UniProtKB-SubCell"/>
</dbReference>
<dbReference type="GO" id="GO:0062054">
    <property type="term" value="F:fluoride channel activity"/>
    <property type="evidence" value="ECO:0007669"/>
    <property type="project" value="UniProtKB-UniRule"/>
</dbReference>
<dbReference type="GO" id="GO:0046872">
    <property type="term" value="F:metal ion binding"/>
    <property type="evidence" value="ECO:0007669"/>
    <property type="project" value="UniProtKB-KW"/>
</dbReference>
<dbReference type="GO" id="GO:0140114">
    <property type="term" value="P:cellular detoxification of fluoride"/>
    <property type="evidence" value="ECO:0007669"/>
    <property type="project" value="UniProtKB-UniRule"/>
</dbReference>
<dbReference type="HAMAP" id="MF_00454">
    <property type="entry name" value="FluC"/>
    <property type="match status" value="1"/>
</dbReference>
<dbReference type="InterPro" id="IPR003691">
    <property type="entry name" value="FluC"/>
</dbReference>
<dbReference type="NCBIfam" id="TIGR00494">
    <property type="entry name" value="crcB"/>
    <property type="match status" value="1"/>
</dbReference>
<dbReference type="NCBIfam" id="NF010792">
    <property type="entry name" value="PRK14196.1"/>
    <property type="match status" value="1"/>
</dbReference>
<dbReference type="PANTHER" id="PTHR28259">
    <property type="entry name" value="FLUORIDE EXPORT PROTEIN 1-RELATED"/>
    <property type="match status" value="1"/>
</dbReference>
<dbReference type="PANTHER" id="PTHR28259:SF1">
    <property type="entry name" value="FLUORIDE EXPORT PROTEIN 1-RELATED"/>
    <property type="match status" value="1"/>
</dbReference>
<dbReference type="Pfam" id="PF02537">
    <property type="entry name" value="CRCB"/>
    <property type="match status" value="1"/>
</dbReference>
<keyword id="KW-0997">Cell inner membrane</keyword>
<keyword id="KW-1003">Cell membrane</keyword>
<keyword id="KW-0407">Ion channel</keyword>
<keyword id="KW-0406">Ion transport</keyword>
<keyword id="KW-0472">Membrane</keyword>
<keyword id="KW-0479">Metal-binding</keyword>
<keyword id="KW-0915">Sodium</keyword>
<keyword id="KW-0812">Transmembrane</keyword>
<keyword id="KW-1133">Transmembrane helix</keyword>
<keyword id="KW-0813">Transport</keyword>
<organism>
    <name type="scientific">Acinetobacter baumannii (strain AYE)</name>
    <dbReference type="NCBI Taxonomy" id="509173"/>
    <lineage>
        <taxon>Bacteria</taxon>
        <taxon>Pseudomonadati</taxon>
        <taxon>Pseudomonadota</taxon>
        <taxon>Gammaproteobacteria</taxon>
        <taxon>Moraxellales</taxon>
        <taxon>Moraxellaceae</taxon>
        <taxon>Acinetobacter</taxon>
        <taxon>Acinetobacter calcoaceticus/baumannii complex</taxon>
    </lineage>
</organism>